<dbReference type="EC" id="1.-.-.-" evidence="5"/>
<dbReference type="EMBL" id="MBFL02000005">
    <property type="protein sequence ID" value="KAF7597141.1"/>
    <property type="molecule type" value="Genomic_DNA"/>
</dbReference>
<dbReference type="SMR" id="P0DUL7"/>
<dbReference type="OrthoDB" id="300709at2759"/>
<dbReference type="GO" id="GO:0005634">
    <property type="term" value="C:nucleus"/>
    <property type="evidence" value="ECO:0007669"/>
    <property type="project" value="TreeGrafter"/>
</dbReference>
<dbReference type="GO" id="GO:0016491">
    <property type="term" value="F:oxidoreductase activity"/>
    <property type="evidence" value="ECO:0007669"/>
    <property type="project" value="UniProtKB-KW"/>
</dbReference>
<dbReference type="CDD" id="cd05251">
    <property type="entry name" value="NmrA_like_SDR_a"/>
    <property type="match status" value="1"/>
</dbReference>
<dbReference type="Gene3D" id="3.40.50.720">
    <property type="entry name" value="NAD(P)-binding Rossmann-like Domain"/>
    <property type="match status" value="1"/>
</dbReference>
<dbReference type="Gene3D" id="3.90.25.10">
    <property type="entry name" value="UDP-galactose 4-epimerase, domain 1"/>
    <property type="match status" value="1"/>
</dbReference>
<dbReference type="InterPro" id="IPR036291">
    <property type="entry name" value="NAD(P)-bd_dom_sf"/>
</dbReference>
<dbReference type="InterPro" id="IPR008030">
    <property type="entry name" value="NmrA-like"/>
</dbReference>
<dbReference type="InterPro" id="IPR051164">
    <property type="entry name" value="NmrA-like_oxidored"/>
</dbReference>
<dbReference type="PANTHER" id="PTHR42748">
    <property type="entry name" value="NITROGEN METABOLITE REPRESSION PROTEIN NMRA FAMILY MEMBER"/>
    <property type="match status" value="1"/>
</dbReference>
<dbReference type="PANTHER" id="PTHR42748:SF7">
    <property type="entry name" value="NMRA LIKE REDOX SENSOR 1-RELATED"/>
    <property type="match status" value="1"/>
</dbReference>
<dbReference type="Pfam" id="PF05368">
    <property type="entry name" value="NmrA"/>
    <property type="match status" value="1"/>
</dbReference>
<dbReference type="SUPFAM" id="SSF51735">
    <property type="entry name" value="NAD(P)-binding Rossmann-fold domains"/>
    <property type="match status" value="1"/>
</dbReference>
<organism>
    <name type="scientific">Aspergillus hancockii</name>
    <dbReference type="NCBI Taxonomy" id="1873369"/>
    <lineage>
        <taxon>Eukaryota</taxon>
        <taxon>Fungi</taxon>
        <taxon>Dikarya</taxon>
        <taxon>Ascomycota</taxon>
        <taxon>Pezizomycotina</taxon>
        <taxon>Eurotiomycetes</taxon>
        <taxon>Eurotiomycetidae</taxon>
        <taxon>Eurotiales</taxon>
        <taxon>Aspergillaceae</taxon>
        <taxon>Aspergillus</taxon>
        <taxon>Aspergillus subgen. Circumdati</taxon>
    </lineage>
</organism>
<sequence>MPATTRLITIYGATGNQGGGVARSLLKNPCFQVRALTRNPNSPASQELAGLGAEIRRADGFDSNSLLAAFEGSWGVFVNINSDDKAFRPAGPTEYDLGMKIVDMAAQAGVQHFVFSSGPSSTELTNGKIRMKAMEMKNKIERYARNNTQFQTVSFICAAWYLENFLVKEIAPLFGGFPFVADAEAFLTFRCPRWGGKEDVPFISISDDYGDIVQGLFLDPHRWNGHVVHGCSDILTFDELVTHFQNVTGQKARFQPLESWETFDTFGVPELEDTKLMFGLTQTTGGLYFGPEPSEKNTAAALKRATAAALGLPRDQQTLITVKGWFQKHFPVTPN</sequence>
<proteinExistence type="evidence at protein level"/>
<comment type="function">
    <text evidence="2 5">NmrA-like family domain-containing oxidoreductase; part of the gene cluster that mediates the biosynthesis of hancockiamides, an unusual new family of N-cinnamoylated piperazines (PubMed:33242032). The NRPS hkm10 and the NmrA-like reductase hkm9 are proposed to convert two molecules of L-Phe to the intermediary piperazine called xenocockiamide A (Probable). Xenocockiamide A is then converted to hancockiamide D via a series of hydroxylations and O-methylations (Probable). The tyrosinase hkm6 may catalyze an aromatic hydroxylation, then the 2-oxoglutarate-dependent Fe(II) dioxygenase hkm4 and the FAD-dependent phenol hydroxylase hkm7 may catalyze consecutive hydroxylations to install 2 more hydroxy groups, and the methyltransferase hkm8 probably catalyzes two methylations using 2 molecules of S-adenosyl-L-methionine (SAM) (Probable). The NRPS hkm11 activates and transfers trans-cinnamate supplied by the PAL hkm12 to hancockiamide D and produces hancockiamide A (PubMed:33242032). NRPS Hkm11 has the flexibility to tolerate the bulky hancockiamide G as a substrate and the absence of the acetyl-transferase hkm3 opens up the opportunity for hkm11 to introduce a second N-cinnamoyl moiety (PubMed:33242032). The cytochrome P450 monooxygenase hkm5 catalyzes the methylenedioxy bridge formation, converting hancockiamide A into hancockiamide G (PubMed:33242032). Hkm5 can also convert hancockiamide B into hancockiamide C, and hancockiamide D into hancockiamide H (PubMed:33242032). The N-acetyltransferase hkm3 finally transfers an acetyl group to 1-N of piperazine, converting hancockiamide A into hancockiamide B and hancockiamide G into hancockiamide C (PubMed:33242032).</text>
</comment>
<comment type="pathway">
    <text evidence="5">Secondary metabolite biosynthesis.</text>
</comment>
<comment type="biotechnology">
    <text evidence="2">Hancockiamide D displays potent cytotoxic activity against murine myeloma NS-1 cells, suggesting a potential antitumour application (PubMed:33242032). More interestingly, hancockiamide C, the likely end metabolite of the hkm pathway, shows potent Arabidopsis thaliana seed anti-germination activity, but is inactive against the monocot Eragrostis tef seed, suggesting that it could be a herbicidal lead targeting monocots (PubMed:33242032). The herbicidal activity of hancockiamide C could be due to its phenylpropanoid-like structural features, which may act on the plant lignan pathways, and hence warrants further investigations (PubMed:33242032).</text>
</comment>
<comment type="similarity">
    <text evidence="4">Belongs to the NmrA-type oxidoreductase family.</text>
</comment>
<accession>P0DUL7</accession>
<keyword id="KW-0521">NADP</keyword>
<keyword id="KW-0560">Oxidoreductase</keyword>
<evidence type="ECO:0000250" key="1">
    <source>
        <dbReference type="UniProtKB" id="Q9HBL8"/>
    </source>
</evidence>
<evidence type="ECO:0000269" key="2">
    <source>
    </source>
</evidence>
<evidence type="ECO:0000303" key="3">
    <source>
    </source>
</evidence>
<evidence type="ECO:0000305" key="4"/>
<evidence type="ECO:0000305" key="5">
    <source>
    </source>
</evidence>
<name>HKM9_ASPHA</name>
<protein>
    <recommendedName>
        <fullName evidence="3">NmrA-like family domain-containing oxidoreductase hkm9</fullName>
        <ecNumber evidence="5">1.-.-.-</ecNumber>
    </recommendedName>
    <alternativeName>
        <fullName evidence="3">Hancockiamides biosynthesis cluster protein 9</fullName>
    </alternativeName>
</protein>
<feature type="chain" id="PRO_0000452936" description="NmrA-like family domain-containing oxidoreductase hkm9">
    <location>
        <begin position="1"/>
        <end position="335"/>
    </location>
</feature>
<feature type="binding site" evidence="1">
    <location>
        <begin position="12"/>
        <end position="17"/>
    </location>
    <ligand>
        <name>NADP(+)</name>
        <dbReference type="ChEBI" id="CHEBI:58349"/>
    </ligand>
</feature>
<feature type="binding site" evidence="1">
    <location>
        <begin position="38"/>
        <end position="42"/>
    </location>
    <ligand>
        <name>NADP(+)</name>
        <dbReference type="ChEBI" id="CHEBI:58349"/>
    </ligand>
</feature>
<feature type="binding site" evidence="1">
    <location>
        <begin position="59"/>
        <end position="60"/>
    </location>
    <ligand>
        <name>NADP(+)</name>
        <dbReference type="ChEBI" id="CHEBI:58349"/>
    </ligand>
</feature>
<feature type="binding site" evidence="1">
    <location>
        <begin position="80"/>
        <end position="82"/>
    </location>
    <ligand>
        <name>NADP(+)</name>
        <dbReference type="ChEBI" id="CHEBI:58349"/>
    </ligand>
</feature>
<feature type="binding site" evidence="1">
    <location>
        <position position="137"/>
    </location>
    <ligand>
        <name>NADP(+)</name>
        <dbReference type="ChEBI" id="CHEBI:58349"/>
    </ligand>
</feature>
<feature type="binding site" evidence="1">
    <location>
        <begin position="161"/>
        <end position="164"/>
    </location>
    <ligand>
        <name>NADP(+)</name>
        <dbReference type="ChEBI" id="CHEBI:58349"/>
    </ligand>
</feature>
<reference key="1">
    <citation type="submission" date="2019-04" db="EMBL/GenBank/DDBJ databases">
        <authorList>
            <person name="Gilchrist C.L.M."/>
            <person name="Chooi Y.H."/>
        </authorList>
    </citation>
    <scope>NUCLEOTIDE SEQUENCE [LARGE SCALE GENOMIC DNA]</scope>
    <source>
        <strain>FRR 3425 / CBS 142004 / DTO 360-G7</strain>
    </source>
</reference>
<reference key="2">
    <citation type="journal article" date="2021" name="Org. Biomol. Chem.">
        <title>Hancockiamides: phenylpropanoid piperazines from Aspergillus hancockii are biosynthesised by a versatile dual single-module NRPS pathway.</title>
        <authorList>
            <person name="Li H."/>
            <person name="Lacey A.E."/>
            <person name="Shu S."/>
            <person name="Kalaitzis J.A."/>
            <person name="Vuong D."/>
            <person name="Crombie A."/>
            <person name="Hu J."/>
            <person name="Gilchrist C.L.M."/>
            <person name="Lacey E."/>
            <person name="Piggott A.M."/>
            <person name="Chooi Y.H."/>
        </authorList>
    </citation>
    <scope>FUNCTION</scope>
    <scope>PATHWAY</scope>
    <scope>BIOTECHNOLOGY</scope>
</reference>